<gene>
    <name type="ordered locus">YER186C</name>
</gene>
<feature type="chain" id="PRO_0000202662" description="Uncharacterized protein YER186C">
    <location>
        <begin position="1"/>
        <end position="306"/>
    </location>
</feature>
<dbReference type="EMBL" id="U18922">
    <property type="protein sequence ID" value="AAB64713.1"/>
    <property type="molecule type" value="Genomic_DNA"/>
</dbReference>
<dbReference type="EMBL" id="BK006939">
    <property type="protein sequence ID" value="DAA07849.1"/>
    <property type="molecule type" value="Genomic_DNA"/>
</dbReference>
<dbReference type="PIR" id="S50689">
    <property type="entry name" value="S50689"/>
</dbReference>
<dbReference type="RefSeq" id="NP_011113.3">
    <property type="nucleotide sequence ID" value="NM_001179076.3"/>
</dbReference>
<dbReference type="BioGRID" id="36940">
    <property type="interactions" value="28"/>
</dbReference>
<dbReference type="DIP" id="DIP-5422N"/>
<dbReference type="FunCoup" id="P40101">
    <property type="interactions" value="30"/>
</dbReference>
<dbReference type="STRING" id="4932.YER186C"/>
<dbReference type="PaxDb" id="4932-YER186C"/>
<dbReference type="EnsemblFungi" id="YER186C_mRNA">
    <property type="protein sequence ID" value="YER186C"/>
    <property type="gene ID" value="YER186C"/>
</dbReference>
<dbReference type="GeneID" id="856935"/>
<dbReference type="KEGG" id="sce:YER186C"/>
<dbReference type="AGR" id="SGD:S000000988"/>
<dbReference type="SGD" id="S000000988">
    <property type="gene designation" value="YER186C"/>
</dbReference>
<dbReference type="VEuPathDB" id="FungiDB:YER186C"/>
<dbReference type="HOGENOM" id="CLU_089425_0_0_1"/>
<dbReference type="InParanoid" id="P40101"/>
<dbReference type="OrthoDB" id="4070809at2759"/>
<dbReference type="BioCyc" id="YEAST:G3O-30342-MONOMER"/>
<dbReference type="BioGRID-ORCS" id="856935">
    <property type="hits" value="1 hit in 10 CRISPR screens"/>
</dbReference>
<dbReference type="PRO" id="PR:P40101"/>
<dbReference type="Proteomes" id="UP000002311">
    <property type="component" value="Chromosome V"/>
</dbReference>
<dbReference type="RNAct" id="P40101">
    <property type="molecule type" value="protein"/>
</dbReference>
<organism>
    <name type="scientific">Saccharomyces cerevisiae (strain ATCC 204508 / S288c)</name>
    <name type="common">Baker's yeast</name>
    <dbReference type="NCBI Taxonomy" id="559292"/>
    <lineage>
        <taxon>Eukaryota</taxon>
        <taxon>Fungi</taxon>
        <taxon>Dikarya</taxon>
        <taxon>Ascomycota</taxon>
        <taxon>Saccharomycotina</taxon>
        <taxon>Saccharomycetes</taxon>
        <taxon>Saccharomycetales</taxon>
        <taxon>Saccharomycetaceae</taxon>
        <taxon>Saccharomyces</taxon>
    </lineage>
</organism>
<sequence length="306" mass="35911">MLWHPDGYEPRVKAIEEEIYANEDRKDVPDKFKFDTVTKTGMVKLRVFKDDLIFKSQRSINLFASRKHPFKSFTADGEGLPLFAFRTKKPFFVRRDYVGFLFYQYEILKNGDFPEESDYEVKGECDGFTLFKVLFCTVKVKKTSYYRNKERISHILELNFGKKEDFRILTLVRCSEIRSVYVVEDKKVIMKWVFTSESKFNLNSSLFIIKAAIGCLPEVGDSIEDIPKFDWDSCPTIGCMCRTKEALFQPESRKDMHICPQLFLGETGPPHYNESSVPWLTKMNICISVLINFLEYTDFMSWMQDN</sequence>
<keyword id="KW-1185">Reference proteome</keyword>
<name>YE16_YEAST</name>
<proteinExistence type="predicted"/>
<accession>P40101</accession>
<accession>D3DM95</accession>
<reference key="1">
    <citation type="journal article" date="1997" name="Nature">
        <title>The nucleotide sequence of Saccharomyces cerevisiae chromosome V.</title>
        <authorList>
            <person name="Dietrich F.S."/>
            <person name="Mulligan J.T."/>
            <person name="Hennessy K.M."/>
            <person name="Yelton M.A."/>
            <person name="Allen E."/>
            <person name="Araujo R."/>
            <person name="Aviles E."/>
            <person name="Berno A."/>
            <person name="Brennan T."/>
            <person name="Carpenter J."/>
            <person name="Chen E."/>
            <person name="Cherry J.M."/>
            <person name="Chung E."/>
            <person name="Duncan M."/>
            <person name="Guzman E."/>
            <person name="Hartzell G."/>
            <person name="Hunicke-Smith S."/>
            <person name="Hyman R.W."/>
            <person name="Kayser A."/>
            <person name="Komp C."/>
            <person name="Lashkari D."/>
            <person name="Lew H."/>
            <person name="Lin D."/>
            <person name="Mosedale D."/>
            <person name="Nakahara K."/>
            <person name="Namath A."/>
            <person name="Norgren R."/>
            <person name="Oefner P."/>
            <person name="Oh C."/>
            <person name="Petel F.X."/>
            <person name="Roberts D."/>
            <person name="Sehl P."/>
            <person name="Schramm S."/>
            <person name="Shogren T."/>
            <person name="Smith V."/>
            <person name="Taylor P."/>
            <person name="Wei Y."/>
            <person name="Botstein D."/>
            <person name="Davis R.W."/>
        </authorList>
    </citation>
    <scope>NUCLEOTIDE SEQUENCE [LARGE SCALE GENOMIC DNA]</scope>
    <source>
        <strain>ATCC 204508 / S288c</strain>
    </source>
</reference>
<reference key="2">
    <citation type="journal article" date="2014" name="G3 (Bethesda)">
        <title>The reference genome sequence of Saccharomyces cerevisiae: Then and now.</title>
        <authorList>
            <person name="Engel S.R."/>
            <person name="Dietrich F.S."/>
            <person name="Fisk D.G."/>
            <person name="Binkley G."/>
            <person name="Balakrishnan R."/>
            <person name="Costanzo M.C."/>
            <person name="Dwight S.S."/>
            <person name="Hitz B.C."/>
            <person name="Karra K."/>
            <person name="Nash R.S."/>
            <person name="Weng S."/>
            <person name="Wong E.D."/>
            <person name="Lloyd P."/>
            <person name="Skrzypek M.S."/>
            <person name="Miyasato S.R."/>
            <person name="Simison M."/>
            <person name="Cherry J.M."/>
        </authorList>
    </citation>
    <scope>GENOME REANNOTATION</scope>
    <source>
        <strain>ATCC 204508 / S288c</strain>
    </source>
</reference>
<protein>
    <recommendedName>
        <fullName>Uncharacterized protein YER186C</fullName>
    </recommendedName>
</protein>